<proteinExistence type="inferred from homology"/>
<dbReference type="EC" id="3.1.3.5" evidence="1"/>
<dbReference type="EMBL" id="CP000860">
    <property type="protein sequence ID" value="ACA59742.1"/>
    <property type="molecule type" value="Genomic_DNA"/>
</dbReference>
<dbReference type="RefSeq" id="WP_012302328.1">
    <property type="nucleotide sequence ID" value="NC_010424.1"/>
</dbReference>
<dbReference type="SMR" id="B1I3V7"/>
<dbReference type="STRING" id="477974.Daud_1231"/>
<dbReference type="KEGG" id="dau:Daud_1231"/>
<dbReference type="eggNOG" id="COG0496">
    <property type="taxonomic scope" value="Bacteria"/>
</dbReference>
<dbReference type="HOGENOM" id="CLU_045192_1_3_9"/>
<dbReference type="OrthoDB" id="9780815at2"/>
<dbReference type="Proteomes" id="UP000008544">
    <property type="component" value="Chromosome"/>
</dbReference>
<dbReference type="GO" id="GO:0005737">
    <property type="term" value="C:cytoplasm"/>
    <property type="evidence" value="ECO:0007669"/>
    <property type="project" value="UniProtKB-SubCell"/>
</dbReference>
<dbReference type="GO" id="GO:0008254">
    <property type="term" value="F:3'-nucleotidase activity"/>
    <property type="evidence" value="ECO:0007669"/>
    <property type="project" value="TreeGrafter"/>
</dbReference>
<dbReference type="GO" id="GO:0008253">
    <property type="term" value="F:5'-nucleotidase activity"/>
    <property type="evidence" value="ECO:0007669"/>
    <property type="project" value="UniProtKB-UniRule"/>
</dbReference>
<dbReference type="GO" id="GO:0004309">
    <property type="term" value="F:exopolyphosphatase activity"/>
    <property type="evidence" value="ECO:0007669"/>
    <property type="project" value="TreeGrafter"/>
</dbReference>
<dbReference type="GO" id="GO:0046872">
    <property type="term" value="F:metal ion binding"/>
    <property type="evidence" value="ECO:0007669"/>
    <property type="project" value="UniProtKB-UniRule"/>
</dbReference>
<dbReference type="GO" id="GO:0000166">
    <property type="term" value="F:nucleotide binding"/>
    <property type="evidence" value="ECO:0007669"/>
    <property type="project" value="UniProtKB-KW"/>
</dbReference>
<dbReference type="FunFam" id="3.40.1210.10:FF:000001">
    <property type="entry name" value="5'/3'-nucleotidase SurE"/>
    <property type="match status" value="1"/>
</dbReference>
<dbReference type="Gene3D" id="3.40.1210.10">
    <property type="entry name" value="Survival protein SurE-like phosphatase/nucleotidase"/>
    <property type="match status" value="1"/>
</dbReference>
<dbReference type="HAMAP" id="MF_00060">
    <property type="entry name" value="SurE"/>
    <property type="match status" value="1"/>
</dbReference>
<dbReference type="InterPro" id="IPR030048">
    <property type="entry name" value="SurE"/>
</dbReference>
<dbReference type="InterPro" id="IPR002828">
    <property type="entry name" value="SurE-like_Pase/nucleotidase"/>
</dbReference>
<dbReference type="InterPro" id="IPR036523">
    <property type="entry name" value="SurE-like_sf"/>
</dbReference>
<dbReference type="NCBIfam" id="NF001490">
    <property type="entry name" value="PRK00346.1-4"/>
    <property type="match status" value="1"/>
</dbReference>
<dbReference type="NCBIfam" id="NF001492">
    <property type="entry name" value="PRK00346.2-2"/>
    <property type="match status" value="1"/>
</dbReference>
<dbReference type="NCBIfam" id="TIGR00087">
    <property type="entry name" value="surE"/>
    <property type="match status" value="1"/>
</dbReference>
<dbReference type="PANTHER" id="PTHR30457">
    <property type="entry name" value="5'-NUCLEOTIDASE SURE"/>
    <property type="match status" value="1"/>
</dbReference>
<dbReference type="PANTHER" id="PTHR30457:SF12">
    <property type="entry name" value="5'_3'-NUCLEOTIDASE SURE"/>
    <property type="match status" value="1"/>
</dbReference>
<dbReference type="Pfam" id="PF01975">
    <property type="entry name" value="SurE"/>
    <property type="match status" value="1"/>
</dbReference>
<dbReference type="SUPFAM" id="SSF64167">
    <property type="entry name" value="SurE-like"/>
    <property type="match status" value="1"/>
</dbReference>
<sequence>MRILLTNDDGIFAPGLEALRNALSDLAETIYIIAPDRERSATGHSITVHRPIRVREACHADGNCCGWIVDGTPADCVKLALESLLPETPDLVISGINLGPNLGTDVLYSGTVSAAMEGLINGVPSLAISLASHREAEFEEAAAFARRLLPLVFEYREIFTANTLLNINVPPGKPVGVRLTRLGNLRYADAVDRRVDPRGRYYYWMAGKPFSPDGHDPDTDIGAVKDRHISITPVKIDLTDYEALDALKKWPVDWKGS</sequence>
<keyword id="KW-0963">Cytoplasm</keyword>
<keyword id="KW-0378">Hydrolase</keyword>
<keyword id="KW-0479">Metal-binding</keyword>
<keyword id="KW-0547">Nucleotide-binding</keyword>
<keyword id="KW-1185">Reference proteome</keyword>
<protein>
    <recommendedName>
        <fullName evidence="1">5'-nucleotidase SurE</fullName>
        <ecNumber evidence="1">3.1.3.5</ecNumber>
    </recommendedName>
    <alternativeName>
        <fullName evidence="1">Nucleoside 5'-monophosphate phosphohydrolase</fullName>
    </alternativeName>
</protein>
<feature type="chain" id="PRO_1000091999" description="5'-nucleotidase SurE">
    <location>
        <begin position="1"/>
        <end position="257"/>
    </location>
</feature>
<feature type="binding site" evidence="1">
    <location>
        <position position="8"/>
    </location>
    <ligand>
        <name>a divalent metal cation</name>
        <dbReference type="ChEBI" id="CHEBI:60240"/>
    </ligand>
</feature>
<feature type="binding site" evidence="1">
    <location>
        <position position="9"/>
    </location>
    <ligand>
        <name>a divalent metal cation</name>
        <dbReference type="ChEBI" id="CHEBI:60240"/>
    </ligand>
</feature>
<feature type="binding site" evidence="1">
    <location>
        <position position="40"/>
    </location>
    <ligand>
        <name>a divalent metal cation</name>
        <dbReference type="ChEBI" id="CHEBI:60240"/>
    </ligand>
</feature>
<feature type="binding site" evidence="1">
    <location>
        <position position="97"/>
    </location>
    <ligand>
        <name>a divalent metal cation</name>
        <dbReference type="ChEBI" id="CHEBI:60240"/>
    </ligand>
</feature>
<name>SURE_DESAP</name>
<gene>
    <name evidence="1" type="primary">surE</name>
    <name type="ordered locus">Daud_1231</name>
</gene>
<accession>B1I3V7</accession>
<comment type="function">
    <text evidence="1">Nucleotidase that shows phosphatase activity on nucleoside 5'-monophosphates.</text>
</comment>
<comment type="catalytic activity">
    <reaction evidence="1">
        <text>a ribonucleoside 5'-phosphate + H2O = a ribonucleoside + phosphate</text>
        <dbReference type="Rhea" id="RHEA:12484"/>
        <dbReference type="ChEBI" id="CHEBI:15377"/>
        <dbReference type="ChEBI" id="CHEBI:18254"/>
        <dbReference type="ChEBI" id="CHEBI:43474"/>
        <dbReference type="ChEBI" id="CHEBI:58043"/>
        <dbReference type="EC" id="3.1.3.5"/>
    </reaction>
</comment>
<comment type="cofactor">
    <cofactor evidence="1">
        <name>a divalent metal cation</name>
        <dbReference type="ChEBI" id="CHEBI:60240"/>
    </cofactor>
    <text evidence="1">Binds 1 divalent metal cation per subunit.</text>
</comment>
<comment type="subcellular location">
    <subcellularLocation>
        <location evidence="1">Cytoplasm</location>
    </subcellularLocation>
</comment>
<comment type="similarity">
    <text evidence="1">Belongs to the SurE nucleotidase family.</text>
</comment>
<evidence type="ECO:0000255" key="1">
    <source>
        <dbReference type="HAMAP-Rule" id="MF_00060"/>
    </source>
</evidence>
<reference key="1">
    <citation type="submission" date="2007-10" db="EMBL/GenBank/DDBJ databases">
        <title>Complete sequence of chromosome of Desulforudis audaxviator MP104C.</title>
        <authorList>
            <person name="Copeland A."/>
            <person name="Lucas S."/>
            <person name="Lapidus A."/>
            <person name="Barry K."/>
            <person name="Glavina del Rio T."/>
            <person name="Dalin E."/>
            <person name="Tice H."/>
            <person name="Bruce D."/>
            <person name="Pitluck S."/>
            <person name="Lowry S.R."/>
            <person name="Larimer F."/>
            <person name="Land M.L."/>
            <person name="Hauser L."/>
            <person name="Kyrpides N."/>
            <person name="Ivanova N.N."/>
            <person name="Richardson P."/>
        </authorList>
    </citation>
    <scope>NUCLEOTIDE SEQUENCE [LARGE SCALE GENOMIC DNA]</scope>
    <source>
        <strain>MP104C</strain>
    </source>
</reference>
<organism>
    <name type="scientific">Desulforudis audaxviator (strain MP104C)</name>
    <dbReference type="NCBI Taxonomy" id="477974"/>
    <lineage>
        <taxon>Bacteria</taxon>
        <taxon>Bacillati</taxon>
        <taxon>Bacillota</taxon>
        <taxon>Clostridia</taxon>
        <taxon>Thermoanaerobacterales</taxon>
        <taxon>Candidatus Desulforudaceae</taxon>
        <taxon>Candidatus Desulforudis</taxon>
    </lineage>
</organism>